<keyword id="KW-0548">Nucleotidyltransferase</keyword>
<keyword id="KW-0694">RNA-binding</keyword>
<keyword id="KW-0698">rRNA processing</keyword>
<keyword id="KW-0808">Transferase</keyword>
<keyword id="KW-0819">tRNA processing</keyword>
<keyword id="KW-0820">tRNA-binding</keyword>
<reference key="1">
    <citation type="journal article" date="2007" name="Genome Res.">
        <title>Genome characteristics of facultatively symbiotic Frankia sp. strains reflect host range and host plant biogeography.</title>
        <authorList>
            <person name="Normand P."/>
            <person name="Lapierre P."/>
            <person name="Tisa L.S."/>
            <person name="Gogarten J.P."/>
            <person name="Alloisio N."/>
            <person name="Bagnarol E."/>
            <person name="Bassi C.A."/>
            <person name="Berry A.M."/>
            <person name="Bickhart D.M."/>
            <person name="Choisne N."/>
            <person name="Couloux A."/>
            <person name="Cournoyer B."/>
            <person name="Cruveiller S."/>
            <person name="Daubin V."/>
            <person name="Demange N."/>
            <person name="Francino M.P."/>
            <person name="Goltsman E."/>
            <person name="Huang Y."/>
            <person name="Kopp O.R."/>
            <person name="Labarre L."/>
            <person name="Lapidus A."/>
            <person name="Lavire C."/>
            <person name="Marechal J."/>
            <person name="Martinez M."/>
            <person name="Mastronunzio J.E."/>
            <person name="Mullin B.C."/>
            <person name="Niemann J."/>
            <person name="Pujic P."/>
            <person name="Rawnsley T."/>
            <person name="Rouy Z."/>
            <person name="Schenowitz C."/>
            <person name="Sellstedt A."/>
            <person name="Tavares F."/>
            <person name="Tomkins J.P."/>
            <person name="Vallenet D."/>
            <person name="Valverde C."/>
            <person name="Wall L.G."/>
            <person name="Wang Y."/>
            <person name="Medigue C."/>
            <person name="Benson D.R."/>
        </authorList>
    </citation>
    <scope>NUCLEOTIDE SEQUENCE [LARGE SCALE GENOMIC DNA]</scope>
    <source>
        <strain>EAN1pec</strain>
    </source>
</reference>
<accession>A8L766</accession>
<protein>
    <recommendedName>
        <fullName evidence="1">Ribonuclease PH</fullName>
        <shortName evidence="1">RNase PH</shortName>
        <ecNumber evidence="1">2.7.7.56</ecNumber>
    </recommendedName>
    <alternativeName>
        <fullName evidence="1">tRNA nucleotidyltransferase</fullName>
    </alternativeName>
</protein>
<gene>
    <name evidence="1" type="primary">rph</name>
    <name type="ordered locus">Franean1_5650</name>
</gene>
<organism>
    <name type="scientific">Parafrankia sp. (strain EAN1pec)</name>
    <dbReference type="NCBI Taxonomy" id="298653"/>
    <lineage>
        <taxon>Bacteria</taxon>
        <taxon>Bacillati</taxon>
        <taxon>Actinomycetota</taxon>
        <taxon>Actinomycetes</taxon>
        <taxon>Frankiales</taxon>
        <taxon>Frankiaceae</taxon>
        <taxon>Parafrankia</taxon>
    </lineage>
</organism>
<name>RNPH_PARS2</name>
<feature type="chain" id="PRO_1000129344" description="Ribonuclease PH">
    <location>
        <begin position="1"/>
        <end position="260"/>
    </location>
</feature>
<feature type="region of interest" description="Disordered" evidence="2">
    <location>
        <begin position="232"/>
        <end position="260"/>
    </location>
</feature>
<feature type="compositionally biased region" description="Gly residues" evidence="2">
    <location>
        <begin position="248"/>
        <end position="260"/>
    </location>
</feature>
<feature type="binding site" evidence="1">
    <location>
        <position position="87"/>
    </location>
    <ligand>
        <name>phosphate</name>
        <dbReference type="ChEBI" id="CHEBI:43474"/>
        <note>substrate</note>
    </ligand>
</feature>
<feature type="binding site" evidence="1">
    <location>
        <begin position="125"/>
        <end position="127"/>
    </location>
    <ligand>
        <name>phosphate</name>
        <dbReference type="ChEBI" id="CHEBI:43474"/>
        <note>substrate</note>
    </ligand>
</feature>
<comment type="function">
    <text evidence="1">Phosphorolytic 3'-5' exoribonuclease that plays an important role in tRNA 3'-end maturation. Removes nucleotide residues following the 3'-CCA terminus of tRNAs; can also add nucleotides to the ends of RNA molecules by using nucleoside diphosphates as substrates, but this may not be physiologically important. Probably plays a role in initiation of 16S rRNA degradation (leading to ribosome degradation) during starvation.</text>
</comment>
<comment type="catalytic activity">
    <reaction evidence="1">
        <text>tRNA(n+1) + phosphate = tRNA(n) + a ribonucleoside 5'-diphosphate</text>
        <dbReference type="Rhea" id="RHEA:10628"/>
        <dbReference type="Rhea" id="RHEA-COMP:17343"/>
        <dbReference type="Rhea" id="RHEA-COMP:17344"/>
        <dbReference type="ChEBI" id="CHEBI:43474"/>
        <dbReference type="ChEBI" id="CHEBI:57930"/>
        <dbReference type="ChEBI" id="CHEBI:173114"/>
        <dbReference type="EC" id="2.7.7.56"/>
    </reaction>
</comment>
<comment type="subunit">
    <text evidence="1">Homohexameric ring arranged as a trimer of dimers.</text>
</comment>
<comment type="similarity">
    <text evidence="1">Belongs to the RNase PH family.</text>
</comment>
<evidence type="ECO:0000255" key="1">
    <source>
        <dbReference type="HAMAP-Rule" id="MF_00564"/>
    </source>
</evidence>
<evidence type="ECO:0000256" key="2">
    <source>
        <dbReference type="SAM" id="MobiDB-lite"/>
    </source>
</evidence>
<proteinExistence type="inferred from homology"/>
<sequence length="260" mass="26938">MIRVDGRTTDQLRDVTIERGWQEHAEGSALISAGRTRVLCAASVTEGVPRWRKGSGLGWVTAEYSMLPRATHTRNDRESVRGRIGGRTHEISRLIGRSLRAAIDLKALGENTIAIDCDVLLADGGTRTAAITGAYVALADACRWLGRPAAIVTSVCAVSVGVVGGVPMLDLAYTEDSTADTDMNVVRTGAGGFVEVQGTAEGTPFERSTLDELLDLAVAGCTRLTEIQNAALAAPPAAGPPAPERAGAGSGSGGKGTGSR</sequence>
<dbReference type="EC" id="2.7.7.56" evidence="1"/>
<dbReference type="EMBL" id="CP000820">
    <property type="protein sequence ID" value="ABW15001.1"/>
    <property type="molecule type" value="Genomic_DNA"/>
</dbReference>
<dbReference type="RefSeq" id="WP_020463105.1">
    <property type="nucleotide sequence ID" value="NC_009921.1"/>
</dbReference>
<dbReference type="SMR" id="A8L766"/>
<dbReference type="STRING" id="298653.Franean1_5650"/>
<dbReference type="KEGG" id="fre:Franean1_5650"/>
<dbReference type="eggNOG" id="COG0689">
    <property type="taxonomic scope" value="Bacteria"/>
</dbReference>
<dbReference type="HOGENOM" id="CLU_050858_0_0_11"/>
<dbReference type="GO" id="GO:0000175">
    <property type="term" value="F:3'-5'-RNA exonuclease activity"/>
    <property type="evidence" value="ECO:0007669"/>
    <property type="project" value="UniProtKB-UniRule"/>
</dbReference>
<dbReference type="GO" id="GO:0000049">
    <property type="term" value="F:tRNA binding"/>
    <property type="evidence" value="ECO:0007669"/>
    <property type="project" value="UniProtKB-UniRule"/>
</dbReference>
<dbReference type="GO" id="GO:0009022">
    <property type="term" value="F:tRNA nucleotidyltransferase activity"/>
    <property type="evidence" value="ECO:0007669"/>
    <property type="project" value="UniProtKB-UniRule"/>
</dbReference>
<dbReference type="GO" id="GO:0016075">
    <property type="term" value="P:rRNA catabolic process"/>
    <property type="evidence" value="ECO:0007669"/>
    <property type="project" value="UniProtKB-UniRule"/>
</dbReference>
<dbReference type="GO" id="GO:0006364">
    <property type="term" value="P:rRNA processing"/>
    <property type="evidence" value="ECO:0007669"/>
    <property type="project" value="UniProtKB-KW"/>
</dbReference>
<dbReference type="GO" id="GO:0008033">
    <property type="term" value="P:tRNA processing"/>
    <property type="evidence" value="ECO:0007669"/>
    <property type="project" value="UniProtKB-UniRule"/>
</dbReference>
<dbReference type="FunFam" id="3.30.230.70:FF:000003">
    <property type="entry name" value="Ribonuclease PH"/>
    <property type="match status" value="1"/>
</dbReference>
<dbReference type="Gene3D" id="3.30.230.70">
    <property type="entry name" value="GHMP Kinase, N-terminal domain"/>
    <property type="match status" value="1"/>
</dbReference>
<dbReference type="HAMAP" id="MF_00564">
    <property type="entry name" value="RNase_PH"/>
    <property type="match status" value="1"/>
</dbReference>
<dbReference type="InterPro" id="IPR001247">
    <property type="entry name" value="ExoRNase_PH_dom1"/>
</dbReference>
<dbReference type="InterPro" id="IPR015847">
    <property type="entry name" value="ExoRNase_PH_dom2"/>
</dbReference>
<dbReference type="InterPro" id="IPR036345">
    <property type="entry name" value="ExoRNase_PH_dom2_sf"/>
</dbReference>
<dbReference type="InterPro" id="IPR027408">
    <property type="entry name" value="PNPase/RNase_PH_dom_sf"/>
</dbReference>
<dbReference type="InterPro" id="IPR020568">
    <property type="entry name" value="Ribosomal_Su5_D2-typ_SF"/>
</dbReference>
<dbReference type="InterPro" id="IPR050080">
    <property type="entry name" value="RNase_PH"/>
</dbReference>
<dbReference type="InterPro" id="IPR002381">
    <property type="entry name" value="RNase_PH_bac-type"/>
</dbReference>
<dbReference type="NCBIfam" id="TIGR01966">
    <property type="entry name" value="RNasePH"/>
    <property type="match status" value="1"/>
</dbReference>
<dbReference type="PANTHER" id="PTHR11953">
    <property type="entry name" value="EXOSOME COMPLEX COMPONENT"/>
    <property type="match status" value="1"/>
</dbReference>
<dbReference type="PANTHER" id="PTHR11953:SF0">
    <property type="entry name" value="EXOSOME COMPLEX COMPONENT RRP41"/>
    <property type="match status" value="1"/>
</dbReference>
<dbReference type="Pfam" id="PF01138">
    <property type="entry name" value="RNase_PH"/>
    <property type="match status" value="1"/>
</dbReference>
<dbReference type="Pfam" id="PF03725">
    <property type="entry name" value="RNase_PH_C"/>
    <property type="match status" value="1"/>
</dbReference>
<dbReference type="SUPFAM" id="SSF55666">
    <property type="entry name" value="Ribonuclease PH domain 2-like"/>
    <property type="match status" value="1"/>
</dbReference>
<dbReference type="SUPFAM" id="SSF54211">
    <property type="entry name" value="Ribosomal protein S5 domain 2-like"/>
    <property type="match status" value="1"/>
</dbReference>